<dbReference type="EMBL" id="AY264879">
    <property type="protein sequence ID" value="AAP92137.1"/>
    <property type="molecule type" value="Genomic_DNA"/>
</dbReference>
<dbReference type="EMBL" id="AY264877">
    <property type="protein sequence ID" value="AAP92137.1"/>
    <property type="status" value="JOINED"/>
    <property type="molecule type" value="Genomic_DNA"/>
</dbReference>
<dbReference type="EMBL" id="AY264878">
    <property type="protein sequence ID" value="AAP92137.1"/>
    <property type="status" value="JOINED"/>
    <property type="molecule type" value="Genomic_DNA"/>
</dbReference>
<dbReference type="EMBL" id="AY264884">
    <property type="protein sequence ID" value="AAP92138.1"/>
    <property type="molecule type" value="Genomic_DNA"/>
</dbReference>
<dbReference type="EMBL" id="AY264877">
    <property type="protein sequence ID" value="AAP92138.1"/>
    <property type="status" value="JOINED"/>
    <property type="molecule type" value="Genomic_DNA"/>
</dbReference>
<dbReference type="EMBL" id="AY264878">
    <property type="protein sequence ID" value="AAP92138.1"/>
    <property type="status" value="JOINED"/>
    <property type="molecule type" value="Genomic_DNA"/>
</dbReference>
<dbReference type="EMBL" id="AY264881">
    <property type="protein sequence ID" value="AAP92138.1"/>
    <property type="status" value="JOINED"/>
    <property type="molecule type" value="Genomic_DNA"/>
</dbReference>
<dbReference type="EMBL" id="AY264883">
    <property type="protein sequence ID" value="AAP92138.1"/>
    <property type="status" value="JOINED"/>
    <property type="molecule type" value="Genomic_DNA"/>
</dbReference>
<dbReference type="EMBL" id="AY264882">
    <property type="protein sequence ID" value="AAP92138.1"/>
    <property type="status" value="JOINED"/>
    <property type="molecule type" value="Genomic_DNA"/>
</dbReference>
<dbReference type="EMBL" id="AY264880">
    <property type="protein sequence ID" value="AAP92138.1"/>
    <property type="status" value="JOINED"/>
    <property type="molecule type" value="Genomic_DNA"/>
</dbReference>
<dbReference type="SMR" id="Q6WXV7"/>
<dbReference type="GlyCosmos" id="Q6WXV7">
    <property type="glycosylation" value="6 sites, No reported glycans"/>
</dbReference>
<dbReference type="GO" id="GO:0005886">
    <property type="term" value="C:plasma membrane"/>
    <property type="evidence" value="ECO:0007669"/>
    <property type="project" value="UniProtKB-SubCell"/>
</dbReference>
<dbReference type="GO" id="GO:0005509">
    <property type="term" value="F:calcium ion binding"/>
    <property type="evidence" value="ECO:0007669"/>
    <property type="project" value="InterPro"/>
</dbReference>
<dbReference type="GO" id="GO:0007156">
    <property type="term" value="P:homophilic cell adhesion via plasma membrane adhesion molecules"/>
    <property type="evidence" value="ECO:0007669"/>
    <property type="project" value="InterPro"/>
</dbReference>
<dbReference type="CDD" id="cd11304">
    <property type="entry name" value="Cadherin_repeat"/>
    <property type="match status" value="5"/>
</dbReference>
<dbReference type="FunFam" id="2.60.40.60:FF:000005">
    <property type="entry name" value="Protocadherin 9"/>
    <property type="match status" value="2"/>
</dbReference>
<dbReference type="FunFam" id="2.60.40.60:FF:000016">
    <property type="entry name" value="Protocadherin 9"/>
    <property type="match status" value="1"/>
</dbReference>
<dbReference type="FunFam" id="2.60.40.60:FF:000030">
    <property type="entry name" value="Protocadherin 9"/>
    <property type="match status" value="1"/>
</dbReference>
<dbReference type="FunFam" id="2.60.40.60:FF:000036">
    <property type="entry name" value="Protocadherin 9"/>
    <property type="match status" value="1"/>
</dbReference>
<dbReference type="FunFam" id="2.60.40.60:FF:000069">
    <property type="entry name" value="Protocadherin-11 X-linked"/>
    <property type="match status" value="1"/>
</dbReference>
<dbReference type="FunFam" id="2.60.40.60:FF:000077">
    <property type="entry name" value="Protocadherin-11 X-linked"/>
    <property type="match status" value="1"/>
</dbReference>
<dbReference type="Gene3D" id="2.60.40.60">
    <property type="entry name" value="Cadherins"/>
    <property type="match status" value="7"/>
</dbReference>
<dbReference type="InterPro" id="IPR002126">
    <property type="entry name" value="Cadherin-like_dom"/>
</dbReference>
<dbReference type="InterPro" id="IPR015919">
    <property type="entry name" value="Cadherin-like_sf"/>
</dbReference>
<dbReference type="InterPro" id="IPR020894">
    <property type="entry name" value="Cadherin_CS"/>
</dbReference>
<dbReference type="InterPro" id="IPR013164">
    <property type="entry name" value="Cadherin_N"/>
</dbReference>
<dbReference type="InterPro" id="IPR013585">
    <property type="entry name" value="Protocadherin"/>
</dbReference>
<dbReference type="PANTHER" id="PTHR24026">
    <property type="entry name" value="FAT ATYPICAL CADHERIN-RELATED"/>
    <property type="match status" value="1"/>
</dbReference>
<dbReference type="PANTHER" id="PTHR24026:SF126">
    <property type="entry name" value="PROTOCADHERIN FAT 4"/>
    <property type="match status" value="1"/>
</dbReference>
<dbReference type="Pfam" id="PF00028">
    <property type="entry name" value="Cadherin"/>
    <property type="match status" value="6"/>
</dbReference>
<dbReference type="Pfam" id="PF08266">
    <property type="entry name" value="Cadherin_2"/>
    <property type="match status" value="1"/>
</dbReference>
<dbReference type="Pfam" id="PF08374">
    <property type="entry name" value="Protocadherin"/>
    <property type="match status" value="1"/>
</dbReference>
<dbReference type="PRINTS" id="PR00205">
    <property type="entry name" value="CADHERIN"/>
</dbReference>
<dbReference type="SMART" id="SM00112">
    <property type="entry name" value="CA"/>
    <property type="match status" value="6"/>
</dbReference>
<dbReference type="SUPFAM" id="SSF49313">
    <property type="entry name" value="Cadherin-like"/>
    <property type="match status" value="6"/>
</dbReference>
<dbReference type="PROSITE" id="PS00232">
    <property type="entry name" value="CADHERIN_1"/>
    <property type="match status" value="5"/>
</dbReference>
<dbReference type="PROSITE" id="PS50268">
    <property type="entry name" value="CADHERIN_2"/>
    <property type="match status" value="7"/>
</dbReference>
<feature type="signal peptide" evidence="2">
    <location>
        <begin position="1"/>
        <end position="23"/>
    </location>
</feature>
<feature type="chain" id="PRO_0000232762" description="Protocadherin-11 X-linked">
    <location>
        <begin position="24"/>
        <end position="1347"/>
    </location>
</feature>
<feature type="topological domain" description="Extracellular" evidence="2">
    <location>
        <begin position="24"/>
        <end position="812"/>
    </location>
</feature>
<feature type="transmembrane region" description="Helical" evidence="2">
    <location>
        <begin position="813"/>
        <end position="833"/>
    </location>
</feature>
<feature type="topological domain" description="Cytoplasmic" evidence="2">
    <location>
        <begin position="834"/>
        <end position="1347"/>
    </location>
</feature>
<feature type="domain" description="Cadherin 1" evidence="3">
    <location>
        <begin position="26"/>
        <end position="139"/>
    </location>
</feature>
<feature type="domain" description="Cadherin 2" evidence="3">
    <location>
        <begin position="140"/>
        <end position="249"/>
    </location>
</feature>
<feature type="domain" description="Cadherin 3" evidence="3">
    <location>
        <begin position="250"/>
        <end position="355"/>
    </location>
</feature>
<feature type="domain" description="Cadherin 4" evidence="3">
    <location>
        <begin position="362"/>
        <end position="466"/>
    </location>
</feature>
<feature type="domain" description="Cadherin 5" evidence="3">
    <location>
        <begin position="467"/>
        <end position="570"/>
    </location>
</feature>
<feature type="domain" description="Cadherin 6" evidence="3">
    <location>
        <begin position="571"/>
        <end position="673"/>
    </location>
</feature>
<feature type="domain" description="Cadherin 7" evidence="3">
    <location>
        <begin position="677"/>
        <end position="795"/>
    </location>
</feature>
<feature type="region of interest" description="Disordered" evidence="4">
    <location>
        <begin position="1031"/>
        <end position="1050"/>
    </location>
</feature>
<feature type="region of interest" description="Disordered" evidence="4">
    <location>
        <begin position="1057"/>
        <end position="1091"/>
    </location>
</feature>
<feature type="region of interest" description="Disordered" evidence="4">
    <location>
        <begin position="1097"/>
        <end position="1116"/>
    </location>
</feature>
<feature type="region of interest" description="Disordered" evidence="4">
    <location>
        <begin position="1325"/>
        <end position="1347"/>
    </location>
</feature>
<feature type="glycosylation site" description="N-linked (GlcNAc...) asparagine" evidence="2">
    <location>
        <position position="27"/>
    </location>
</feature>
<feature type="glycosylation site" description="N-linked (GlcNAc...) asparagine" evidence="2">
    <location>
        <position position="48"/>
    </location>
</feature>
<feature type="glycosylation site" description="N-linked (GlcNAc...) asparagine" evidence="2">
    <location>
        <position position="54"/>
    </location>
</feature>
<feature type="glycosylation site" description="N-linked (GlcNAc...) asparagine" evidence="2">
    <location>
        <position position="344"/>
    </location>
</feature>
<feature type="glycosylation site" description="N-linked (GlcNAc...) asparagine" evidence="2">
    <location>
        <position position="553"/>
    </location>
</feature>
<feature type="glycosylation site" description="N-linked (GlcNAc...) asparagine" evidence="2">
    <location>
        <position position="773"/>
    </location>
</feature>
<feature type="splice variant" id="VSP_017994" description="In isoform 2." evidence="5">
    <original>PMKEVVRSCTPMKE</original>
    <variation>TDSRTSTIEICSEI</variation>
    <location>
        <begin position="1012"/>
        <end position="1025"/>
    </location>
</feature>
<feature type="splice variant" id="VSP_017995" description="In isoform 2." evidence="5">
    <location>
        <begin position="1026"/>
        <end position="1347"/>
    </location>
</feature>
<name>PC11X_PONPY</name>
<proteinExistence type="inferred from homology"/>
<keyword id="KW-0025">Alternative splicing</keyword>
<keyword id="KW-0106">Calcium</keyword>
<keyword id="KW-0130">Cell adhesion</keyword>
<keyword id="KW-1003">Cell membrane</keyword>
<keyword id="KW-0325">Glycoprotein</keyword>
<keyword id="KW-0472">Membrane</keyword>
<keyword id="KW-0677">Repeat</keyword>
<keyword id="KW-0732">Signal</keyword>
<keyword id="KW-0812">Transmembrane</keyword>
<keyword id="KW-1133">Transmembrane helix</keyword>
<accession>Q6WXV7</accession>
<accession>Q6WXV8</accession>
<reference key="1">
    <citation type="submission" date="2003-03" db="EMBL/GenBank/DDBJ databases">
        <title>Protocadherin X/Y, a neural cell surface adhesion molecule subject to differential and domain-specific selection in the course of hominid evolution.</title>
        <authorList>
            <person name="Williams N.A."/>
            <person name="Crow T.J."/>
        </authorList>
    </citation>
    <scope>NUCLEOTIDE SEQUENCE [GENOMIC DNA]</scope>
</reference>
<organism>
    <name type="scientific">Pongo pygmaeus</name>
    <name type="common">Bornean orangutan</name>
    <dbReference type="NCBI Taxonomy" id="9600"/>
    <lineage>
        <taxon>Eukaryota</taxon>
        <taxon>Metazoa</taxon>
        <taxon>Chordata</taxon>
        <taxon>Craniata</taxon>
        <taxon>Vertebrata</taxon>
        <taxon>Euteleostomi</taxon>
        <taxon>Mammalia</taxon>
        <taxon>Eutheria</taxon>
        <taxon>Euarchontoglires</taxon>
        <taxon>Primates</taxon>
        <taxon>Haplorrhini</taxon>
        <taxon>Catarrhini</taxon>
        <taxon>Hominidae</taxon>
        <taxon>Pongo</taxon>
    </lineage>
</organism>
<gene>
    <name type="primary">PCDH11X</name>
    <name type="synonym">PCDH11</name>
    <name type="synonym">PCDHX</name>
</gene>
<sequence length="1347" mass="147655">MDLLSGTYIFAVLLACVVFHSGAQEKNYTIREEMPENVLIGDLLKDLNLSLIPNKSLTTAMQFKLVYKTGDVPLTRIEEDTGEIFTTGARIDREKLCAGIPRDEHCFYEVEVAILPDEIFRLVKIRFLIEDINDNAPLFPATVINISIPENSAINSKYTLPAAVDPDVGINGVQNYELIKSQNIFGLDVIETPEGDKMPQLIVQKELDREEKDTYVMKVKVEDGGFPQRSSTAILQVSVTDTNDNHPVFKETEIEVSIPENAPVGTSVTQLHATDADIGENAKIHFSFSNLVSNIARRLFHLNATTGLITIKEPLDREETPNHKLLVLASDGGLMPARAMVLVNVTDVNDNVPSIDIRYIVNPINDTVVLSENIPLNTKIALITVTDKDADHNGRVTCFTDHEIPFRLRPVFSNQFLLETAAYLDYESTKEYAIKLLAADAGKPPLNQSAMLFIKVKDENDNAPVFTQSFVTVSIPENNSPGIQLTKVSATDADSGPNAEINYLLGPDAPPEFSLDRRTGMLTVVKKLDREKEDKYLFTILAKDNGVPPLTSNVTVFVSIIDQNDNSPVFTHNEYNFYVPENLPRHGTVGLITVTDPDYGDNSAVTLSILDENDDFTIDSQTGVIRPNISFDREKQESYTFYVKAEDGGRVSRSSSAKVTINVVDVNDNKPVFIVPPSNYSYELVLPSTNPGTVVFQVIAVDNDTGMNAEVRYSIVGGNTRDLFAIDQETGNITLMEKCDVTDLGLHRVLVKANDLGQPDSLFSVVIVNLFVNESVTNATLINELVRKSIEAPVTPNTEIADVSSPTSDYVKILVAAVAGTVTVVVVIFITAVVRCRQAPHLKAAQKNKQNSEWATPNPENRQMIMMKKKKKKKKHSPKNLLLNFVTIEETKADDVDSDGNRITLDLPIDLEEQTMGKYNWVTTPTTFKPDSPDLARHYKSASPQPAFQIQPETPLNSKHHIIQELPLDNTFVACDSISKRSSSSSDPYSVSDCGYPVTTFEVPVSVHTRPPMKEVVRSCTPMKESTTMEIWIHPQPQRKSEGKGAGKSQRRVTFHLPEGSQESSSDGGLGEHDAGSLTSTSHGLPLGYPQEEYFDRATPSNRTEGDGNSDPESTFIPGLKKAAEITVQPTVEEASDNCTQECLIYGHSDACWMPASLDHSSSSQAQASALCHSPPLSQASTQHHSPPVTQTIALCHSPPVTQTIALCHSPPPIQVSALHHSPPLVQATALRHSPPSAQASALCYSPPLAQAAAISHSSPLPQVIALHRSQAQSSVSLQQGWVQGAEGLCSVDQGVQGSATSQFYTMSERLHPSDDSIKVIPLTTFTPRQQARPSRGDSPIMEEHPL</sequence>
<evidence type="ECO:0000250" key="1"/>
<evidence type="ECO:0000255" key="2"/>
<evidence type="ECO:0000255" key="3">
    <source>
        <dbReference type="PROSITE-ProRule" id="PRU00043"/>
    </source>
</evidence>
<evidence type="ECO:0000256" key="4">
    <source>
        <dbReference type="SAM" id="MobiDB-lite"/>
    </source>
</evidence>
<evidence type="ECO:0000305" key="5"/>
<comment type="function">
    <text evidence="1">Potential calcium-dependent cell-adhesion protein.</text>
</comment>
<comment type="subcellular location">
    <subcellularLocation>
        <location evidence="5">Cell membrane</location>
        <topology evidence="5">Single-pass type I membrane protein</topology>
    </subcellularLocation>
</comment>
<comment type="alternative products">
    <event type="alternative splicing"/>
    <isoform>
        <id>Q6WXV7-1</id>
        <name>1</name>
        <sequence type="displayed"/>
    </isoform>
    <isoform>
        <id>Q6WXV7-2</id>
        <name>2</name>
        <sequence type="described" ref="VSP_017994 VSP_017995"/>
    </isoform>
</comment>
<protein>
    <recommendedName>
        <fullName>Protocadherin-11 X-linked</fullName>
        <shortName>Protocadherin-11</shortName>
    </recommendedName>
    <alternativeName>
        <fullName>Protocadherin on the X chromosome</fullName>
        <shortName>PCDH-X</shortName>
    </alternativeName>
</protein>